<name>CMOB_VIBCH</name>
<evidence type="ECO:0000255" key="1">
    <source>
        <dbReference type="HAMAP-Rule" id="MF_01590"/>
    </source>
</evidence>
<feature type="chain" id="PRO_0000313985" description="tRNA U34 carboxymethyltransferase">
    <location>
        <begin position="1"/>
        <end position="323"/>
    </location>
</feature>
<feature type="binding site" evidence="1">
    <location>
        <position position="91"/>
    </location>
    <ligand>
        <name>carboxy-S-adenosyl-L-methionine</name>
        <dbReference type="ChEBI" id="CHEBI:134278"/>
    </ligand>
</feature>
<feature type="binding site" evidence="1">
    <location>
        <position position="105"/>
    </location>
    <ligand>
        <name>carboxy-S-adenosyl-L-methionine</name>
        <dbReference type="ChEBI" id="CHEBI:134278"/>
    </ligand>
</feature>
<feature type="binding site" evidence="1">
    <location>
        <position position="110"/>
    </location>
    <ligand>
        <name>carboxy-S-adenosyl-L-methionine</name>
        <dbReference type="ChEBI" id="CHEBI:134278"/>
    </ligand>
</feature>
<feature type="binding site" evidence="1">
    <location>
        <position position="130"/>
    </location>
    <ligand>
        <name>carboxy-S-adenosyl-L-methionine</name>
        <dbReference type="ChEBI" id="CHEBI:134278"/>
    </ligand>
</feature>
<feature type="binding site" evidence="1">
    <location>
        <begin position="152"/>
        <end position="154"/>
    </location>
    <ligand>
        <name>carboxy-S-adenosyl-L-methionine</name>
        <dbReference type="ChEBI" id="CHEBI:134278"/>
    </ligand>
</feature>
<feature type="binding site" evidence="1">
    <location>
        <begin position="181"/>
        <end position="182"/>
    </location>
    <ligand>
        <name>carboxy-S-adenosyl-L-methionine</name>
        <dbReference type="ChEBI" id="CHEBI:134278"/>
    </ligand>
</feature>
<feature type="binding site" evidence="1">
    <location>
        <position position="196"/>
    </location>
    <ligand>
        <name>carboxy-S-adenosyl-L-methionine</name>
        <dbReference type="ChEBI" id="CHEBI:134278"/>
    </ligand>
</feature>
<feature type="binding site" evidence="1">
    <location>
        <position position="200"/>
    </location>
    <ligand>
        <name>carboxy-S-adenosyl-L-methionine</name>
        <dbReference type="ChEBI" id="CHEBI:134278"/>
    </ligand>
</feature>
<feature type="binding site" evidence="1">
    <location>
        <position position="315"/>
    </location>
    <ligand>
        <name>carboxy-S-adenosyl-L-methionine</name>
        <dbReference type="ChEBI" id="CHEBI:134278"/>
    </ligand>
</feature>
<dbReference type="EC" id="2.5.1.-" evidence="1"/>
<dbReference type="EMBL" id="AE003852">
    <property type="protein sequence ID" value="AAF94322.1"/>
    <property type="molecule type" value="Genomic_DNA"/>
</dbReference>
<dbReference type="PIR" id="C82234">
    <property type="entry name" value="C82234"/>
</dbReference>
<dbReference type="RefSeq" id="NP_230808.1">
    <property type="nucleotide sequence ID" value="NC_002505.1"/>
</dbReference>
<dbReference type="RefSeq" id="WP_000481534.1">
    <property type="nucleotide sequence ID" value="NZ_LT906614.1"/>
</dbReference>
<dbReference type="SMR" id="Q9KSU3"/>
<dbReference type="STRING" id="243277.VC_1163"/>
<dbReference type="DNASU" id="2614596"/>
<dbReference type="EnsemblBacteria" id="AAF94322">
    <property type="protein sequence ID" value="AAF94322"/>
    <property type="gene ID" value="VC_1163"/>
</dbReference>
<dbReference type="KEGG" id="vch:VC_1163"/>
<dbReference type="PATRIC" id="fig|243277.26.peg.1112"/>
<dbReference type="eggNOG" id="COG0500">
    <property type="taxonomic scope" value="Bacteria"/>
</dbReference>
<dbReference type="HOGENOM" id="CLU_052665_0_0_6"/>
<dbReference type="Proteomes" id="UP000000584">
    <property type="component" value="Chromosome 1"/>
</dbReference>
<dbReference type="GO" id="GO:0008168">
    <property type="term" value="F:methyltransferase activity"/>
    <property type="evidence" value="ECO:0000318"/>
    <property type="project" value="GO_Central"/>
</dbReference>
<dbReference type="GO" id="GO:0016765">
    <property type="term" value="F:transferase activity, transferring alkyl or aryl (other than methyl) groups"/>
    <property type="evidence" value="ECO:0007669"/>
    <property type="project" value="UniProtKB-UniRule"/>
</dbReference>
<dbReference type="GO" id="GO:0002098">
    <property type="term" value="P:tRNA wobble uridine modification"/>
    <property type="evidence" value="ECO:0007669"/>
    <property type="project" value="InterPro"/>
</dbReference>
<dbReference type="CDD" id="cd02440">
    <property type="entry name" value="AdoMet_MTases"/>
    <property type="match status" value="1"/>
</dbReference>
<dbReference type="Gene3D" id="3.40.50.150">
    <property type="entry name" value="Vaccinia Virus protein VP39"/>
    <property type="match status" value="1"/>
</dbReference>
<dbReference type="HAMAP" id="MF_01590">
    <property type="entry name" value="tRNA_carboxymethyltr_CmoB"/>
    <property type="match status" value="1"/>
</dbReference>
<dbReference type="InterPro" id="IPR010017">
    <property type="entry name" value="CmoB"/>
</dbReference>
<dbReference type="InterPro" id="IPR027555">
    <property type="entry name" value="Mo5U34_MeTrfas-like"/>
</dbReference>
<dbReference type="InterPro" id="IPR029063">
    <property type="entry name" value="SAM-dependent_MTases_sf"/>
</dbReference>
<dbReference type="NCBIfam" id="NF011650">
    <property type="entry name" value="PRK15068.1"/>
    <property type="match status" value="1"/>
</dbReference>
<dbReference type="NCBIfam" id="TIGR00452">
    <property type="entry name" value="tRNA 5-methoxyuridine(34)/uridine 5-oxyacetic acid(34) synthase CmoB"/>
    <property type="match status" value="1"/>
</dbReference>
<dbReference type="PANTHER" id="PTHR43464">
    <property type="entry name" value="METHYLTRANSFERASE"/>
    <property type="match status" value="1"/>
</dbReference>
<dbReference type="PANTHER" id="PTHR43464:SF95">
    <property type="entry name" value="TRNA U34 CARBOXYMETHYLTRANSFERASE"/>
    <property type="match status" value="1"/>
</dbReference>
<dbReference type="Pfam" id="PF08003">
    <property type="entry name" value="Methyltransf_9"/>
    <property type="match status" value="1"/>
</dbReference>
<dbReference type="SUPFAM" id="SSF53335">
    <property type="entry name" value="S-adenosyl-L-methionine-dependent methyltransferases"/>
    <property type="match status" value="1"/>
</dbReference>
<comment type="function">
    <text evidence="1">Catalyzes carboxymethyl transfer from carboxy-S-adenosyl-L-methionine (Cx-SAM) to 5-hydroxyuridine (ho5U) to form 5-carboxymethoxyuridine (cmo5U) at position 34 in tRNAs.</text>
</comment>
<comment type="catalytic activity">
    <reaction evidence="1">
        <text>carboxy-S-adenosyl-L-methionine + 5-hydroxyuridine(34) in tRNA = 5-carboxymethoxyuridine(34) in tRNA + S-adenosyl-L-homocysteine + H(+)</text>
        <dbReference type="Rhea" id="RHEA:52848"/>
        <dbReference type="Rhea" id="RHEA-COMP:13381"/>
        <dbReference type="Rhea" id="RHEA-COMP:13383"/>
        <dbReference type="ChEBI" id="CHEBI:15378"/>
        <dbReference type="ChEBI" id="CHEBI:57856"/>
        <dbReference type="ChEBI" id="CHEBI:134278"/>
        <dbReference type="ChEBI" id="CHEBI:136877"/>
        <dbReference type="ChEBI" id="CHEBI:136879"/>
    </reaction>
</comment>
<comment type="subunit">
    <text evidence="1">Homotetramer.</text>
</comment>
<comment type="similarity">
    <text evidence="1">Belongs to the class I-like SAM-binding methyltransferase superfamily. CmoB family.</text>
</comment>
<protein>
    <recommendedName>
        <fullName evidence="1">tRNA U34 carboxymethyltransferase</fullName>
        <ecNumber evidence="1">2.5.1.-</ecNumber>
    </recommendedName>
</protein>
<accession>Q9KSU3</accession>
<sequence length="323" mass="37340">MFNFANVYQQIAQHPQLQLWLNTLPQQLTDWQAKQHGDLDRWMRNLKKIPVGQPEVIDLKNAVAAHNHQPLAQGEQKKLEAVLKTFHPWRKGPYHLHGIHIDTEWRSDWKWDRLLPHISPLKNRLVLDVGCGNGYHMWRMLGEGAQQVFGIDPSELFLIQFEAVRKLLGDDQRVHLLPLGIEQMPELNAFDTVFSMGVLYHRRSPLDHLLQLKNQLVAGGELILETLVVEGDEHTVLVPFDRYAQMRNVYFFPSALALKVWLEKTGFVDVRIVDENITSLGEQRTTEWMTHNSLPDYVDPQDPSKTIEGYPAPRRAILIAKKP</sequence>
<gene>
    <name evidence="1" type="primary">cmoB</name>
    <name type="ordered locus">VC_1163</name>
</gene>
<keyword id="KW-1185">Reference proteome</keyword>
<keyword id="KW-0808">Transferase</keyword>
<keyword id="KW-0819">tRNA processing</keyword>
<proteinExistence type="inferred from homology"/>
<reference key="1">
    <citation type="journal article" date="2000" name="Nature">
        <title>DNA sequence of both chromosomes of the cholera pathogen Vibrio cholerae.</title>
        <authorList>
            <person name="Heidelberg J.F."/>
            <person name="Eisen J.A."/>
            <person name="Nelson W.C."/>
            <person name="Clayton R.A."/>
            <person name="Gwinn M.L."/>
            <person name="Dodson R.J."/>
            <person name="Haft D.H."/>
            <person name="Hickey E.K."/>
            <person name="Peterson J.D."/>
            <person name="Umayam L.A."/>
            <person name="Gill S.R."/>
            <person name="Nelson K.E."/>
            <person name="Read T.D."/>
            <person name="Tettelin H."/>
            <person name="Richardson D.L."/>
            <person name="Ermolaeva M.D."/>
            <person name="Vamathevan J.J."/>
            <person name="Bass S."/>
            <person name="Qin H."/>
            <person name="Dragoi I."/>
            <person name="Sellers P."/>
            <person name="McDonald L.A."/>
            <person name="Utterback T.R."/>
            <person name="Fleischmann R.D."/>
            <person name="Nierman W.C."/>
            <person name="White O."/>
            <person name="Salzberg S.L."/>
            <person name="Smith H.O."/>
            <person name="Colwell R.R."/>
            <person name="Mekalanos J.J."/>
            <person name="Venter J.C."/>
            <person name="Fraser C.M."/>
        </authorList>
    </citation>
    <scope>NUCLEOTIDE SEQUENCE [LARGE SCALE GENOMIC DNA]</scope>
    <source>
        <strain>ATCC 39315 / El Tor Inaba N16961</strain>
    </source>
</reference>
<organism>
    <name type="scientific">Vibrio cholerae serotype O1 (strain ATCC 39315 / El Tor Inaba N16961)</name>
    <dbReference type="NCBI Taxonomy" id="243277"/>
    <lineage>
        <taxon>Bacteria</taxon>
        <taxon>Pseudomonadati</taxon>
        <taxon>Pseudomonadota</taxon>
        <taxon>Gammaproteobacteria</taxon>
        <taxon>Vibrionales</taxon>
        <taxon>Vibrionaceae</taxon>
        <taxon>Vibrio</taxon>
    </lineage>
</organism>